<organism>
    <name type="scientific">Azotobacter vinelandii (strain DJ / ATCC BAA-1303)</name>
    <dbReference type="NCBI Taxonomy" id="322710"/>
    <lineage>
        <taxon>Bacteria</taxon>
        <taxon>Pseudomonadati</taxon>
        <taxon>Pseudomonadota</taxon>
        <taxon>Gammaproteobacteria</taxon>
        <taxon>Pseudomonadales</taxon>
        <taxon>Pseudomonadaceae</taxon>
        <taxon>Azotobacter</taxon>
    </lineage>
</organism>
<gene>
    <name evidence="1" type="primary">rplL</name>
    <name type="ordered locus">Avin_06160</name>
</gene>
<accession>C1DKK4</accession>
<evidence type="ECO:0000255" key="1">
    <source>
        <dbReference type="HAMAP-Rule" id="MF_00368"/>
    </source>
</evidence>
<evidence type="ECO:0000305" key="2"/>
<reference key="1">
    <citation type="journal article" date="2009" name="J. Bacteriol.">
        <title>Genome sequence of Azotobacter vinelandii, an obligate aerobe specialized to support diverse anaerobic metabolic processes.</title>
        <authorList>
            <person name="Setubal J.C."/>
            <person name="Dos Santos P."/>
            <person name="Goldman B.S."/>
            <person name="Ertesvaag H."/>
            <person name="Espin G."/>
            <person name="Rubio L.M."/>
            <person name="Valla S."/>
            <person name="Almeida N.F."/>
            <person name="Balasubramanian D."/>
            <person name="Cromes L."/>
            <person name="Curatti L."/>
            <person name="Du Z."/>
            <person name="Godsy E."/>
            <person name="Goodner B."/>
            <person name="Hellner-Burris K."/>
            <person name="Hernandez J.A."/>
            <person name="Houmiel K."/>
            <person name="Imperial J."/>
            <person name="Kennedy C."/>
            <person name="Larson T.J."/>
            <person name="Latreille P."/>
            <person name="Ligon L.S."/>
            <person name="Lu J."/>
            <person name="Maerk M."/>
            <person name="Miller N.M."/>
            <person name="Norton S."/>
            <person name="O'Carroll I.P."/>
            <person name="Paulsen I."/>
            <person name="Raulfs E.C."/>
            <person name="Roemer R."/>
            <person name="Rosser J."/>
            <person name="Segura D."/>
            <person name="Slater S."/>
            <person name="Stricklin S.L."/>
            <person name="Studholme D.J."/>
            <person name="Sun J."/>
            <person name="Viana C.J."/>
            <person name="Wallin E."/>
            <person name="Wang B."/>
            <person name="Wheeler C."/>
            <person name="Zhu H."/>
            <person name="Dean D.R."/>
            <person name="Dixon R."/>
            <person name="Wood D."/>
        </authorList>
    </citation>
    <scope>NUCLEOTIDE SEQUENCE [LARGE SCALE GENOMIC DNA]</scope>
    <source>
        <strain>DJ / ATCC BAA-1303</strain>
    </source>
</reference>
<sequence>MALTNEDIINAVSEMSVMQIVELIKAMEEKFGVTAAAAVAAGPAAAAPVAEEQTEFTVVLAEAGDKKVNVIKVVRELTGLGLKEAKAVVDGAPGVVKEGISKDEAEAAKKALEEAGAKVELK</sequence>
<dbReference type="EMBL" id="CP001157">
    <property type="protein sequence ID" value="ACO76867.1"/>
    <property type="molecule type" value="Genomic_DNA"/>
</dbReference>
<dbReference type="RefSeq" id="WP_012699295.1">
    <property type="nucleotide sequence ID" value="NC_012560.1"/>
</dbReference>
<dbReference type="SMR" id="C1DKK4"/>
<dbReference type="STRING" id="322710.Avin_06160"/>
<dbReference type="EnsemblBacteria" id="ACO76867">
    <property type="protein sequence ID" value="ACO76867"/>
    <property type="gene ID" value="Avin_06160"/>
</dbReference>
<dbReference type="GeneID" id="88184028"/>
<dbReference type="KEGG" id="avn:Avin_06160"/>
<dbReference type="eggNOG" id="COG0222">
    <property type="taxonomic scope" value="Bacteria"/>
</dbReference>
<dbReference type="HOGENOM" id="CLU_086499_3_2_6"/>
<dbReference type="OrthoDB" id="9811748at2"/>
<dbReference type="Proteomes" id="UP000002424">
    <property type="component" value="Chromosome"/>
</dbReference>
<dbReference type="GO" id="GO:0022625">
    <property type="term" value="C:cytosolic large ribosomal subunit"/>
    <property type="evidence" value="ECO:0007669"/>
    <property type="project" value="TreeGrafter"/>
</dbReference>
<dbReference type="GO" id="GO:0003729">
    <property type="term" value="F:mRNA binding"/>
    <property type="evidence" value="ECO:0007669"/>
    <property type="project" value="TreeGrafter"/>
</dbReference>
<dbReference type="GO" id="GO:0003735">
    <property type="term" value="F:structural constituent of ribosome"/>
    <property type="evidence" value="ECO:0007669"/>
    <property type="project" value="InterPro"/>
</dbReference>
<dbReference type="GO" id="GO:0006412">
    <property type="term" value="P:translation"/>
    <property type="evidence" value="ECO:0007669"/>
    <property type="project" value="UniProtKB-UniRule"/>
</dbReference>
<dbReference type="CDD" id="cd00387">
    <property type="entry name" value="Ribosomal_L7_L12"/>
    <property type="match status" value="1"/>
</dbReference>
<dbReference type="FunFam" id="1.20.5.710:FF:000003">
    <property type="entry name" value="50S ribosomal protein L7/L12"/>
    <property type="match status" value="1"/>
</dbReference>
<dbReference type="FunFam" id="3.30.1390.10:FF:000001">
    <property type="entry name" value="50S ribosomal protein L7/L12"/>
    <property type="match status" value="1"/>
</dbReference>
<dbReference type="Gene3D" id="3.30.1390.10">
    <property type="match status" value="1"/>
</dbReference>
<dbReference type="Gene3D" id="1.20.5.710">
    <property type="entry name" value="Single helix bin"/>
    <property type="match status" value="1"/>
</dbReference>
<dbReference type="HAMAP" id="MF_00368">
    <property type="entry name" value="Ribosomal_bL12"/>
    <property type="match status" value="1"/>
</dbReference>
<dbReference type="InterPro" id="IPR000206">
    <property type="entry name" value="Ribosomal_bL12"/>
</dbReference>
<dbReference type="InterPro" id="IPR013823">
    <property type="entry name" value="Ribosomal_bL12_C"/>
</dbReference>
<dbReference type="InterPro" id="IPR014719">
    <property type="entry name" value="Ribosomal_bL12_C/ClpS-like"/>
</dbReference>
<dbReference type="InterPro" id="IPR008932">
    <property type="entry name" value="Ribosomal_bL12_oligo"/>
</dbReference>
<dbReference type="InterPro" id="IPR036235">
    <property type="entry name" value="Ribosomal_bL12_oligo_N_sf"/>
</dbReference>
<dbReference type="NCBIfam" id="TIGR00855">
    <property type="entry name" value="L12"/>
    <property type="match status" value="1"/>
</dbReference>
<dbReference type="PANTHER" id="PTHR45987">
    <property type="entry name" value="39S RIBOSOMAL PROTEIN L12"/>
    <property type="match status" value="1"/>
</dbReference>
<dbReference type="PANTHER" id="PTHR45987:SF4">
    <property type="entry name" value="LARGE RIBOSOMAL SUBUNIT PROTEIN BL12M"/>
    <property type="match status" value="1"/>
</dbReference>
<dbReference type="Pfam" id="PF00542">
    <property type="entry name" value="Ribosomal_L12"/>
    <property type="match status" value="1"/>
</dbReference>
<dbReference type="Pfam" id="PF16320">
    <property type="entry name" value="Ribosomal_L12_N"/>
    <property type="match status" value="1"/>
</dbReference>
<dbReference type="SUPFAM" id="SSF54736">
    <property type="entry name" value="ClpS-like"/>
    <property type="match status" value="1"/>
</dbReference>
<dbReference type="SUPFAM" id="SSF48300">
    <property type="entry name" value="Ribosomal protein L7/12, oligomerisation (N-terminal) domain"/>
    <property type="match status" value="1"/>
</dbReference>
<protein>
    <recommendedName>
        <fullName evidence="1">Large ribosomal subunit protein bL12</fullName>
    </recommendedName>
    <alternativeName>
        <fullName evidence="2">50S ribosomal protein L7/L12</fullName>
    </alternativeName>
</protein>
<proteinExistence type="inferred from homology"/>
<name>RL7_AZOVD</name>
<comment type="function">
    <text evidence="1">Forms part of the ribosomal stalk which helps the ribosome interact with GTP-bound translation factors. Is thus essential for accurate translation.</text>
</comment>
<comment type="subunit">
    <text evidence="1">Homodimer. Part of the ribosomal stalk of the 50S ribosomal subunit. Forms a multimeric L10(L12)X complex, where L10 forms an elongated spine to which 2 to 4 L12 dimers bind in a sequential fashion. Binds GTP-bound translation factors.</text>
</comment>
<comment type="similarity">
    <text evidence="1">Belongs to the bacterial ribosomal protein bL12 family.</text>
</comment>
<keyword id="KW-0687">Ribonucleoprotein</keyword>
<keyword id="KW-0689">Ribosomal protein</keyword>
<feature type="chain" id="PRO_1000205550" description="Large ribosomal subunit protein bL12">
    <location>
        <begin position="1"/>
        <end position="122"/>
    </location>
</feature>